<keyword id="KW-1185">Reference proteome</keyword>
<keyword id="KW-0833">Ubl conjugation pathway</keyword>
<proteinExistence type="evidence at transcript level"/>
<evidence type="ECO:0000250" key="1"/>
<evidence type="ECO:0000255" key="2">
    <source>
        <dbReference type="PROSITE-ProRule" id="PRU00080"/>
    </source>
</evidence>
<evidence type="ECO:0000256" key="3">
    <source>
        <dbReference type="SAM" id="MobiDB-lite"/>
    </source>
</evidence>
<evidence type="ECO:0000305" key="4"/>
<accession>Q9QZM9</accession>
<accession>Q3TP74</accession>
<accession>Q8C5V6</accession>
<reference key="1">
    <citation type="journal article" date="1999" name="Curr. Biol.">
        <title>A family of mammalian F-box proteins.</title>
        <authorList>
            <person name="Winston J.T."/>
            <person name="Koepp D.M."/>
            <person name="Zhu C."/>
            <person name="Elledge S.J."/>
            <person name="Harper J.W."/>
        </authorList>
    </citation>
    <scope>NUCLEOTIDE SEQUENCE [MRNA]</scope>
</reference>
<reference key="2">
    <citation type="journal article" date="2005" name="Science">
        <title>The transcriptional landscape of the mammalian genome.</title>
        <authorList>
            <person name="Carninci P."/>
            <person name="Kasukawa T."/>
            <person name="Katayama S."/>
            <person name="Gough J."/>
            <person name="Frith M.C."/>
            <person name="Maeda N."/>
            <person name="Oyama R."/>
            <person name="Ravasi T."/>
            <person name="Lenhard B."/>
            <person name="Wells C."/>
            <person name="Kodzius R."/>
            <person name="Shimokawa K."/>
            <person name="Bajic V.B."/>
            <person name="Brenner S.E."/>
            <person name="Batalov S."/>
            <person name="Forrest A.R."/>
            <person name="Zavolan M."/>
            <person name="Davis M.J."/>
            <person name="Wilming L.G."/>
            <person name="Aidinis V."/>
            <person name="Allen J.E."/>
            <person name="Ambesi-Impiombato A."/>
            <person name="Apweiler R."/>
            <person name="Aturaliya R.N."/>
            <person name="Bailey T.L."/>
            <person name="Bansal M."/>
            <person name="Baxter L."/>
            <person name="Beisel K.W."/>
            <person name="Bersano T."/>
            <person name="Bono H."/>
            <person name="Chalk A.M."/>
            <person name="Chiu K.P."/>
            <person name="Choudhary V."/>
            <person name="Christoffels A."/>
            <person name="Clutterbuck D.R."/>
            <person name="Crowe M.L."/>
            <person name="Dalla E."/>
            <person name="Dalrymple B.P."/>
            <person name="de Bono B."/>
            <person name="Della Gatta G."/>
            <person name="di Bernardo D."/>
            <person name="Down T."/>
            <person name="Engstrom P."/>
            <person name="Fagiolini M."/>
            <person name="Faulkner G."/>
            <person name="Fletcher C.F."/>
            <person name="Fukushima T."/>
            <person name="Furuno M."/>
            <person name="Futaki S."/>
            <person name="Gariboldi M."/>
            <person name="Georgii-Hemming P."/>
            <person name="Gingeras T.R."/>
            <person name="Gojobori T."/>
            <person name="Green R.E."/>
            <person name="Gustincich S."/>
            <person name="Harbers M."/>
            <person name="Hayashi Y."/>
            <person name="Hensch T.K."/>
            <person name="Hirokawa N."/>
            <person name="Hill D."/>
            <person name="Huminiecki L."/>
            <person name="Iacono M."/>
            <person name="Ikeo K."/>
            <person name="Iwama A."/>
            <person name="Ishikawa T."/>
            <person name="Jakt M."/>
            <person name="Kanapin A."/>
            <person name="Katoh M."/>
            <person name="Kawasawa Y."/>
            <person name="Kelso J."/>
            <person name="Kitamura H."/>
            <person name="Kitano H."/>
            <person name="Kollias G."/>
            <person name="Krishnan S.P."/>
            <person name="Kruger A."/>
            <person name="Kummerfeld S.K."/>
            <person name="Kurochkin I.V."/>
            <person name="Lareau L.F."/>
            <person name="Lazarevic D."/>
            <person name="Lipovich L."/>
            <person name="Liu J."/>
            <person name="Liuni S."/>
            <person name="McWilliam S."/>
            <person name="Madan Babu M."/>
            <person name="Madera M."/>
            <person name="Marchionni L."/>
            <person name="Matsuda H."/>
            <person name="Matsuzawa S."/>
            <person name="Miki H."/>
            <person name="Mignone F."/>
            <person name="Miyake S."/>
            <person name="Morris K."/>
            <person name="Mottagui-Tabar S."/>
            <person name="Mulder N."/>
            <person name="Nakano N."/>
            <person name="Nakauchi H."/>
            <person name="Ng P."/>
            <person name="Nilsson R."/>
            <person name="Nishiguchi S."/>
            <person name="Nishikawa S."/>
            <person name="Nori F."/>
            <person name="Ohara O."/>
            <person name="Okazaki Y."/>
            <person name="Orlando V."/>
            <person name="Pang K.C."/>
            <person name="Pavan W.J."/>
            <person name="Pavesi G."/>
            <person name="Pesole G."/>
            <person name="Petrovsky N."/>
            <person name="Piazza S."/>
            <person name="Reed J."/>
            <person name="Reid J.F."/>
            <person name="Ring B.Z."/>
            <person name="Ringwald M."/>
            <person name="Rost B."/>
            <person name="Ruan Y."/>
            <person name="Salzberg S.L."/>
            <person name="Sandelin A."/>
            <person name="Schneider C."/>
            <person name="Schoenbach C."/>
            <person name="Sekiguchi K."/>
            <person name="Semple C.A."/>
            <person name="Seno S."/>
            <person name="Sessa L."/>
            <person name="Sheng Y."/>
            <person name="Shibata Y."/>
            <person name="Shimada H."/>
            <person name="Shimada K."/>
            <person name="Silva D."/>
            <person name="Sinclair B."/>
            <person name="Sperling S."/>
            <person name="Stupka E."/>
            <person name="Sugiura K."/>
            <person name="Sultana R."/>
            <person name="Takenaka Y."/>
            <person name="Taki K."/>
            <person name="Tammoja K."/>
            <person name="Tan S.L."/>
            <person name="Tang S."/>
            <person name="Taylor M.S."/>
            <person name="Tegner J."/>
            <person name="Teichmann S.A."/>
            <person name="Ueda H.R."/>
            <person name="van Nimwegen E."/>
            <person name="Verardo R."/>
            <person name="Wei C.L."/>
            <person name="Yagi K."/>
            <person name="Yamanishi H."/>
            <person name="Zabarovsky E."/>
            <person name="Zhu S."/>
            <person name="Zimmer A."/>
            <person name="Hide W."/>
            <person name="Bult C."/>
            <person name="Grimmond S.M."/>
            <person name="Teasdale R.D."/>
            <person name="Liu E.T."/>
            <person name="Brusic V."/>
            <person name="Quackenbush J."/>
            <person name="Wahlestedt C."/>
            <person name="Mattick J.S."/>
            <person name="Hume D.A."/>
            <person name="Kai C."/>
            <person name="Sasaki D."/>
            <person name="Tomaru Y."/>
            <person name="Fukuda S."/>
            <person name="Kanamori-Katayama M."/>
            <person name="Suzuki M."/>
            <person name="Aoki J."/>
            <person name="Arakawa T."/>
            <person name="Iida J."/>
            <person name="Imamura K."/>
            <person name="Itoh M."/>
            <person name="Kato T."/>
            <person name="Kawaji H."/>
            <person name="Kawagashira N."/>
            <person name="Kawashima T."/>
            <person name="Kojima M."/>
            <person name="Kondo S."/>
            <person name="Konno H."/>
            <person name="Nakano K."/>
            <person name="Ninomiya N."/>
            <person name="Nishio T."/>
            <person name="Okada M."/>
            <person name="Plessy C."/>
            <person name="Shibata K."/>
            <person name="Shiraki T."/>
            <person name="Suzuki S."/>
            <person name="Tagami M."/>
            <person name="Waki K."/>
            <person name="Watahiki A."/>
            <person name="Okamura-Oho Y."/>
            <person name="Suzuki H."/>
            <person name="Kawai J."/>
            <person name="Hayashizaki Y."/>
        </authorList>
    </citation>
    <scope>NUCLEOTIDE SEQUENCE [LARGE SCALE MRNA]</scope>
    <source>
        <strain>C57BL/6J</strain>
        <tissue>Stomach</tissue>
        <tissue>Testis</tissue>
    </source>
</reference>
<feature type="chain" id="PRO_0000119897" description="F-box only protein 16">
    <location>
        <begin position="1"/>
        <end position="334"/>
    </location>
</feature>
<feature type="domain" description="F-box" evidence="2">
    <location>
        <begin position="86"/>
        <end position="132"/>
    </location>
</feature>
<feature type="region of interest" description="Disordered" evidence="3">
    <location>
        <begin position="168"/>
        <end position="222"/>
    </location>
</feature>
<feature type="region of interest" description="Disordered" evidence="3">
    <location>
        <begin position="314"/>
        <end position="334"/>
    </location>
</feature>
<feature type="compositionally biased region" description="Low complexity" evidence="3">
    <location>
        <begin position="194"/>
        <end position="204"/>
    </location>
</feature>
<feature type="compositionally biased region" description="Basic and acidic residues" evidence="3">
    <location>
        <begin position="210"/>
        <end position="222"/>
    </location>
</feature>
<feature type="compositionally biased region" description="Low complexity" evidence="3">
    <location>
        <begin position="323"/>
        <end position="334"/>
    </location>
</feature>
<feature type="sequence conflict" description="In Ref. 2; BAC36580." evidence="4" ref="2">
    <original>S</original>
    <variation>F</variation>
    <location>
        <position position="102"/>
    </location>
</feature>
<comment type="function">
    <text>Probably recognizes and binds to some phosphorylated proteins and promotes their ubiquitination and degradation.</text>
</comment>
<comment type="subunit">
    <text evidence="1">Part of a SCF (SKP1-cullin-F-box) protein ligase complex.</text>
</comment>
<protein>
    <recommendedName>
        <fullName>F-box only protein 16</fullName>
    </recommendedName>
</protein>
<organism>
    <name type="scientific">Mus musculus</name>
    <name type="common">Mouse</name>
    <dbReference type="NCBI Taxonomy" id="10090"/>
    <lineage>
        <taxon>Eukaryota</taxon>
        <taxon>Metazoa</taxon>
        <taxon>Chordata</taxon>
        <taxon>Craniata</taxon>
        <taxon>Vertebrata</taxon>
        <taxon>Euteleostomi</taxon>
        <taxon>Mammalia</taxon>
        <taxon>Eutheria</taxon>
        <taxon>Euarchontoglires</taxon>
        <taxon>Glires</taxon>
        <taxon>Rodentia</taxon>
        <taxon>Myomorpha</taxon>
        <taxon>Muroidea</taxon>
        <taxon>Muridae</taxon>
        <taxon>Murinae</taxon>
        <taxon>Mus</taxon>
        <taxon>Mus</taxon>
    </lineage>
</organism>
<name>FBX16_MOUSE</name>
<sequence>MMAFAPPKSIDGPKMQTKMSTWTPLNHQLLNDQVFEERRALLGKWFDKWTDSQRRRILTGLLERCSLSQQKFCCRKLQEKIPAEALDFTTKLPRVLSVYIFSFLDPRSLCRCAQVSWYWKSLAELDQLWMLKCLRFNWYISFSPTPFEQGVWKKHYIQMVRELHVTKPKTPPKDEFTTADVQPIPGNSPDEKQSPSLAFRSSSSLRKKNNPGEKELPPWRSSDKHPTDIIRFNYLDNCDPELFRLGRRKRSEVTPDFKRQLRDKKNKLQDRARLRKAQSLISLSSPPKVPVRLAWPLHLPVAPSDREAATEALLEHLQKHPGLQSPSPRLQSQS</sequence>
<dbReference type="EMBL" id="AF176531">
    <property type="protein sequence ID" value="AAF09140.1"/>
    <property type="molecule type" value="mRNA"/>
</dbReference>
<dbReference type="EMBL" id="AK077043">
    <property type="protein sequence ID" value="BAC36580.1"/>
    <property type="molecule type" value="mRNA"/>
</dbReference>
<dbReference type="EMBL" id="AK164657">
    <property type="protein sequence ID" value="BAE37863.1"/>
    <property type="molecule type" value="mRNA"/>
</dbReference>
<dbReference type="CCDS" id="CCDS36956.1"/>
<dbReference type="RefSeq" id="NP_056610.1">
    <property type="nucleotide sequence ID" value="NM_015795.2"/>
</dbReference>
<dbReference type="SMR" id="Q9QZM9"/>
<dbReference type="FunCoup" id="Q9QZM9">
    <property type="interactions" value="10"/>
</dbReference>
<dbReference type="STRING" id="10090.ENSMUSP00000153015"/>
<dbReference type="iPTMnet" id="Q9QZM9"/>
<dbReference type="PhosphoSitePlus" id="Q9QZM9"/>
<dbReference type="PaxDb" id="10090-ENSMUSP00000130805"/>
<dbReference type="ProteomicsDB" id="270964"/>
<dbReference type="Antibodypedia" id="23118">
    <property type="antibodies" value="106 antibodies from 15 providers"/>
</dbReference>
<dbReference type="DNASU" id="50759"/>
<dbReference type="Ensembl" id="ENSMUST00000224629.2">
    <property type="protein sequence ID" value="ENSMUSP00000153015.2"/>
    <property type="gene ID" value="ENSMUSG00000034532.10"/>
</dbReference>
<dbReference type="GeneID" id="50759"/>
<dbReference type="KEGG" id="mmu:50759"/>
<dbReference type="UCSC" id="uc007ujd.1">
    <property type="organism name" value="mouse"/>
</dbReference>
<dbReference type="AGR" id="MGI:1354706"/>
<dbReference type="CTD" id="157574"/>
<dbReference type="MGI" id="MGI:1354706">
    <property type="gene designation" value="Fbxo16"/>
</dbReference>
<dbReference type="VEuPathDB" id="HostDB:ENSMUSG00000034532"/>
<dbReference type="eggNOG" id="KOG0274">
    <property type="taxonomic scope" value="Eukaryota"/>
</dbReference>
<dbReference type="GeneTree" id="ENSGT00940000159021"/>
<dbReference type="HOGENOM" id="CLU_065593_0_0_1"/>
<dbReference type="InParanoid" id="Q9QZM9"/>
<dbReference type="OMA" id="DRWSDGQ"/>
<dbReference type="OrthoDB" id="10257471at2759"/>
<dbReference type="PhylomeDB" id="Q9QZM9"/>
<dbReference type="TreeFam" id="TF328656"/>
<dbReference type="BioGRID-ORCS" id="50759">
    <property type="hits" value="5 hits in 78 CRISPR screens"/>
</dbReference>
<dbReference type="ChiTaRS" id="Fbxo16">
    <property type="organism name" value="mouse"/>
</dbReference>
<dbReference type="PRO" id="PR:Q9QZM9"/>
<dbReference type="Proteomes" id="UP000000589">
    <property type="component" value="Chromosome 14"/>
</dbReference>
<dbReference type="RNAct" id="Q9QZM9">
    <property type="molecule type" value="protein"/>
</dbReference>
<dbReference type="Bgee" id="ENSMUSG00000034532">
    <property type="expression patterns" value="Expressed in animal zygote and 111 other cell types or tissues"/>
</dbReference>
<dbReference type="ExpressionAtlas" id="Q9QZM9">
    <property type="expression patterns" value="baseline and differential"/>
</dbReference>
<dbReference type="CDD" id="cd22172">
    <property type="entry name" value="F-box_FBXO16"/>
    <property type="match status" value="1"/>
</dbReference>
<dbReference type="Gene3D" id="1.20.1280.50">
    <property type="match status" value="1"/>
</dbReference>
<dbReference type="InterPro" id="IPR036047">
    <property type="entry name" value="F-box-like_dom_sf"/>
</dbReference>
<dbReference type="InterPro" id="IPR001810">
    <property type="entry name" value="F-box_dom"/>
</dbReference>
<dbReference type="InterPro" id="IPR052805">
    <property type="entry name" value="GEF_Ubiquitin-Prot_Reg"/>
</dbReference>
<dbReference type="PANTHER" id="PTHR46857">
    <property type="entry name" value="EPITHELIAL CELL-TRANSFORMING SEQUENCE 2 ONCOGENE-LIKE"/>
    <property type="match status" value="1"/>
</dbReference>
<dbReference type="PANTHER" id="PTHR46857:SF2">
    <property type="entry name" value="F-BOX ONLY PROTEIN 16"/>
    <property type="match status" value="1"/>
</dbReference>
<dbReference type="Pfam" id="PF12937">
    <property type="entry name" value="F-box-like"/>
    <property type="match status" value="1"/>
</dbReference>
<dbReference type="SMART" id="SM00256">
    <property type="entry name" value="FBOX"/>
    <property type="match status" value="1"/>
</dbReference>
<dbReference type="SUPFAM" id="SSF81383">
    <property type="entry name" value="F-box domain"/>
    <property type="match status" value="1"/>
</dbReference>
<dbReference type="PROSITE" id="PS50181">
    <property type="entry name" value="FBOX"/>
    <property type="match status" value="1"/>
</dbReference>
<gene>
    <name type="primary">Fbxo16</name>
    <name type="synonym">Fbx16</name>
</gene>